<comment type="subunit">
    <text evidence="2">Interacts with RASP2.</text>
</comment>
<comment type="subcellular location">
    <subcellularLocation>
        <location evidence="2">Cytoplasmic vesicle</location>
        <location evidence="2">Secretory vesicle</location>
        <location evidence="2">Rhoptry membrane</location>
        <topology evidence="2">Peripheral membrane protein</topology>
        <orientation evidence="2">Cytoplasmic side</orientation>
    </subcellularLocation>
    <text evidence="2">Localizes to the extremity of the neck of the rhoptry (PubMed:31492901). Localizes to pre-rhoptry compartments as well as mature rhoptries (PubMed:31492901).</text>
</comment>
<comment type="developmental stage">
    <text evidence="2">Expressed in tachyzoites (at protein level).</text>
</comment>
<comment type="disruption phenotype">
    <text evidence="2">No defect in tachyzoite growth, intracellular replication and host cell invasion.</text>
</comment>
<gene>
    <name evidence="3" type="primary">RASP1</name>
    <name evidence="5" type="ORF">TGGT1_235130</name>
</gene>
<name>RASP1_TOXGG</name>
<sequence length="487" mass="55099">MFVLDPAAICCCAVTCCCGVGSVCAYRKRQSIPHPSECALIGKMYRLCGCHDHDKFDVLIEIHEIHDLTQSGKFFVEVHAGRSEERTGVCSAKKGRVEIQERVNIHVRQADKTLTVRVKKQGLTSTEAIGDAVIGVKSELIDGAFPKRQSFFCQKDGKTACKIVLSFHRLDTGNVSLGDFQMSPLLHQALLIAQSEAEARGETLQVDILNMTEVERLRFLSKVLEGPLKQMSSIGGAWKNLYFRAAERRNGKWEWQYWSSKDDCMSGIKKRGAYSFMAISLVLPDKHDRHCFYIRYHDTGGVHDLFFKRVDRDRNLWSDGLFEFIEKLREYLEKHPEVAMSGRGGHSSRREKKKEGDVGGSRTPRKRDGKALTPRTGASDDAGDDGIRGRSPRGSDRRALSHRSFVDPAELAEKRRVLSPRETAADEMTRPRASVLKGRMIEGLMYDRSLQPGEKNEEASEADERPRERTEGVEYEREEEQPLLFTQ</sequence>
<evidence type="ECO:0000256" key="1">
    <source>
        <dbReference type="SAM" id="MobiDB-lite"/>
    </source>
</evidence>
<evidence type="ECO:0000269" key="2">
    <source>
    </source>
</evidence>
<evidence type="ECO:0000303" key="3">
    <source>
    </source>
</evidence>
<evidence type="ECO:0000305" key="4"/>
<evidence type="ECO:0000312" key="5">
    <source>
        <dbReference type="EMBL" id="EPR61906.1"/>
    </source>
</evidence>
<evidence type="ECO:0000312" key="6">
    <source>
        <dbReference type="Proteomes" id="UP000005641"/>
    </source>
</evidence>
<accession>A0A125YYR0</accession>
<dbReference type="EMBL" id="AAQM03000118">
    <property type="protein sequence ID" value="EPR61906.1"/>
    <property type="molecule type" value="Genomic_DNA"/>
</dbReference>
<dbReference type="SMR" id="A0A125YYR0"/>
<dbReference type="EnsemblProtists" id="EPR61906">
    <property type="protein sequence ID" value="EPR61906"/>
    <property type="gene ID" value="TGGT1_235130"/>
</dbReference>
<dbReference type="VEuPathDB" id="ToxoDB:TGGT1_235130"/>
<dbReference type="Proteomes" id="UP000005641">
    <property type="component" value="Unassembled WGS sequence"/>
</dbReference>
<dbReference type="GO" id="GO:0031410">
    <property type="term" value="C:cytoplasmic vesicle"/>
    <property type="evidence" value="ECO:0007669"/>
    <property type="project" value="UniProtKB-KW"/>
</dbReference>
<dbReference type="GO" id="GO:0033016">
    <property type="term" value="C:rhoptry membrane"/>
    <property type="evidence" value="ECO:0007669"/>
    <property type="project" value="UniProtKB-SubCell"/>
</dbReference>
<dbReference type="InterPro" id="IPR056293">
    <property type="entry name" value="PH_CERLI1"/>
</dbReference>
<dbReference type="Pfam" id="PF23634">
    <property type="entry name" value="PH_CERLI1"/>
    <property type="match status" value="1"/>
</dbReference>
<proteinExistence type="evidence at protein level"/>
<reference evidence="6" key="1">
    <citation type="submission" date="2013-05" db="EMBL/GenBank/DDBJ databases">
        <authorList>
            <person name="Sibley D."/>
            <person name="Venepally P."/>
            <person name="Karamycheva S."/>
            <person name="Hadjithomas M."/>
            <person name="Khan A."/>
            <person name="Brunk B."/>
            <person name="Roos D."/>
            <person name="Caler E."/>
            <person name="Lorenzi H."/>
        </authorList>
    </citation>
    <scope>NUCLEOTIDE SEQUENCE [LARGE SCALE GENOMIC DNA]</scope>
    <source>
        <strain evidence="6">ATCC 50853 / GT1</strain>
    </source>
</reference>
<reference evidence="4" key="2">
    <citation type="journal article" date="2019" name="Nat. Commun.">
        <title>A lipid-binding protein mediates rhoptry discharge and invasion in Plasmodium falciparum and Toxoplasma gondii parasites.</title>
        <authorList>
            <person name="Suarez C."/>
            <person name="Lentini G."/>
            <person name="Ramaswamy R."/>
            <person name="Maynadier M."/>
            <person name="Aquilini E."/>
            <person name="Berry-Sterkers L."/>
            <person name="Cipriano M."/>
            <person name="Chen A.L."/>
            <person name="Bradley P."/>
            <person name="Striepen B."/>
            <person name="Boulanger M.J."/>
            <person name="Lebrun M."/>
        </authorList>
    </citation>
    <scope>INTERACTION WITH RASP2</scope>
    <scope>SUBCELLULAR LOCATION</scope>
    <scope>DEVELOPMENTAL STAGE</scope>
    <scope>DISRUPTION PHENOTYPE</scope>
</reference>
<protein>
    <recommendedName>
        <fullName evidence="3">Rhoptry apical surface protein 1</fullName>
        <shortName evidence="3">TgRASP1</shortName>
    </recommendedName>
</protein>
<feature type="chain" id="PRO_5007183844" description="Rhoptry apical surface protein 1">
    <location>
        <begin position="1"/>
        <end position="487"/>
    </location>
</feature>
<feature type="region of interest" description="Disordered" evidence="1">
    <location>
        <begin position="337"/>
        <end position="487"/>
    </location>
</feature>
<feature type="compositionally biased region" description="Basic and acidic residues" evidence="1">
    <location>
        <begin position="385"/>
        <end position="399"/>
    </location>
</feature>
<feature type="compositionally biased region" description="Basic and acidic residues" evidence="1">
    <location>
        <begin position="454"/>
        <end position="475"/>
    </location>
</feature>
<keyword id="KW-0968">Cytoplasmic vesicle</keyword>
<keyword id="KW-0472">Membrane</keyword>
<organism evidence="6">
    <name type="scientific">Toxoplasma gondii (strain ATCC 50853 / GT1)</name>
    <dbReference type="NCBI Taxonomy" id="507601"/>
    <lineage>
        <taxon>Eukaryota</taxon>
        <taxon>Sar</taxon>
        <taxon>Alveolata</taxon>
        <taxon>Apicomplexa</taxon>
        <taxon>Conoidasida</taxon>
        <taxon>Coccidia</taxon>
        <taxon>Eucoccidiorida</taxon>
        <taxon>Eimeriorina</taxon>
        <taxon>Sarcocystidae</taxon>
        <taxon>Toxoplasma</taxon>
    </lineage>
</organism>